<comment type="function">
    <text evidence="3 4 5">Involved in the oxidative degradation of abscisic acid. Plays an important role in determining abscisic acid levels in dry seeds and in the control of postgermination growth.</text>
</comment>
<comment type="catalytic activity">
    <reaction evidence="4">
        <text>2-cis-(+)-abscisate + reduced [NADPH--hemoprotein reductase] + O2 = (+)-8'-hydroxyabscisate + oxidized [NADPH--hemoprotein reductase] + H2O + H(+)</text>
        <dbReference type="Rhea" id="RHEA:12897"/>
        <dbReference type="Rhea" id="RHEA-COMP:11964"/>
        <dbReference type="Rhea" id="RHEA-COMP:11965"/>
        <dbReference type="ChEBI" id="CHEBI:15377"/>
        <dbReference type="ChEBI" id="CHEBI:15378"/>
        <dbReference type="ChEBI" id="CHEBI:15379"/>
        <dbReference type="ChEBI" id="CHEBI:37569"/>
        <dbReference type="ChEBI" id="CHEBI:57618"/>
        <dbReference type="ChEBI" id="CHEBI:58210"/>
        <dbReference type="ChEBI" id="CHEBI:58490"/>
        <dbReference type="EC" id="1.14.14.137"/>
    </reaction>
</comment>
<comment type="cofactor">
    <cofactor evidence="1">
        <name>heme</name>
        <dbReference type="ChEBI" id="CHEBI:30413"/>
    </cofactor>
</comment>
<comment type="pathway">
    <text>Plant hormone degradation; abscisic acid degradation.</text>
</comment>
<comment type="subcellular location">
    <subcellularLocation>
        <location evidence="7">Membrane</location>
        <topology evidence="7">Single-pass membrane protein</topology>
    </subcellularLocation>
</comment>
<comment type="alternative products">
    <event type="alternative splicing"/>
    <isoform>
        <id>Q949P1-1</id>
        <name>1</name>
        <sequence type="displayed"/>
    </isoform>
    <text>A number of isoforms are produced. According to EST sequences.</text>
</comment>
<comment type="tissue specificity">
    <text evidence="3 4 5">Mainly expressed in flowers, siliques, roots and stems. Lower expression in rosette leaves and dry seeds. Expressed in vascular tissues of embryo during the seed development.</text>
</comment>
<comment type="developmental stage">
    <text evidence="3 5">Expressed predominantly during mid-maturation of seed and down-regulated during late maturation. Up-regulated 12 hours after seed imbibition.</text>
</comment>
<comment type="induction">
    <text evidence="3 4 6">By abscisic acid treatment, salt or osmotic stresses, and by dehydration and rehydration. Expression regulated by phytochrome B.</text>
</comment>
<comment type="disruption phenotype">
    <text evidence="5">Plants show a reduced germination.</text>
</comment>
<comment type="similarity">
    <text evidence="7">Belongs to the cytochrome P450 family.</text>
</comment>
<comment type="sequence caution" evidence="7">
    <conflict type="erroneous gene model prediction">
        <sequence resource="EMBL-CDS" id="CAA16713"/>
    </conflict>
</comment>
<comment type="sequence caution" evidence="7">
    <conflict type="erroneous gene model prediction">
        <sequence resource="EMBL-CDS" id="CAB78925"/>
    </conflict>
</comment>
<evidence type="ECO:0000250" key="1"/>
<evidence type="ECO:0000255" key="2"/>
<evidence type="ECO:0000269" key="3">
    <source>
    </source>
</evidence>
<evidence type="ECO:0000269" key="4">
    <source>
    </source>
</evidence>
<evidence type="ECO:0000269" key="5">
    <source>
    </source>
</evidence>
<evidence type="ECO:0000269" key="6">
    <source>
    </source>
</evidence>
<evidence type="ECO:0000305" key="7"/>
<protein>
    <recommendedName>
        <fullName>Abscisic acid 8'-hydroxylase 1</fullName>
        <shortName>ABA 8'-hydroxylase 1</shortName>
        <ecNumber evidence="4">1.14.14.137</ecNumber>
    </recommendedName>
    <alternativeName>
        <fullName>Cytochrome P450 707A1</fullName>
    </alternativeName>
</protein>
<sequence length="467" mass="53037">MDISALFLTLFAGSLFLYFLRCLISQRRFGSSKLPLPPGTMGWPYVGETFQLYSQDPNVFFQSKQKRYGSVFKTHVLGCPCVMISSPEAAKFVLVTKSHLFKPTFPASKERMLGKQAIFFHQGDYHAKLRKLVLRAFMPESIRNMVPDIESIAQDSLRSWEGTMINTYQEMKTYTFNVALLSIFGKDEVLYREDLKRCYYILEKGYNSMPVNLPGTLFHKSMKARKELSQILARILSERRQNGSSHNDLLGSFMGDKEELTDEQIADNIIGVIFAARDTTASVMSWILKYLAENPNVLEAVTEEQMAIRKDKEEGESLTWGDTKKMPLTSRVIQETLRVASILSFTFREAVEDVEYEGYLIPKGWKVLPLFRNIHHSADIFSNPGKFDPSRFEVAPKPNTFMPFGNGTHSCPGNELAKLEMSIMIHHLTTKYSWSIVGASDGIQYGPFALPQNGLPIVLARKPEIEV</sequence>
<keyword id="KW-0025">Alternative splicing</keyword>
<keyword id="KW-0349">Heme</keyword>
<keyword id="KW-0408">Iron</keyword>
<keyword id="KW-0472">Membrane</keyword>
<keyword id="KW-0479">Metal-binding</keyword>
<keyword id="KW-0503">Monooxygenase</keyword>
<keyword id="KW-0521">NADP</keyword>
<keyword id="KW-0560">Oxidoreductase</keyword>
<keyword id="KW-1185">Reference proteome</keyword>
<keyword id="KW-0346">Stress response</keyword>
<keyword id="KW-0812">Transmembrane</keyword>
<keyword id="KW-1133">Transmembrane helix</keyword>
<organism>
    <name type="scientific">Arabidopsis thaliana</name>
    <name type="common">Mouse-ear cress</name>
    <dbReference type="NCBI Taxonomy" id="3702"/>
    <lineage>
        <taxon>Eukaryota</taxon>
        <taxon>Viridiplantae</taxon>
        <taxon>Streptophyta</taxon>
        <taxon>Embryophyta</taxon>
        <taxon>Tracheophyta</taxon>
        <taxon>Spermatophyta</taxon>
        <taxon>Magnoliopsida</taxon>
        <taxon>eudicotyledons</taxon>
        <taxon>Gunneridae</taxon>
        <taxon>Pentapetalae</taxon>
        <taxon>rosids</taxon>
        <taxon>malvids</taxon>
        <taxon>Brassicales</taxon>
        <taxon>Brassicaceae</taxon>
        <taxon>Camelineae</taxon>
        <taxon>Arabidopsis</taxon>
    </lineage>
</organism>
<name>ABAH1_ARATH</name>
<dbReference type="EC" id="1.14.14.137" evidence="4"/>
<dbReference type="EMBL" id="AB122149">
    <property type="protein sequence ID" value="BAD16629.1"/>
    <property type="molecule type" value="mRNA"/>
</dbReference>
<dbReference type="EMBL" id="AL021687">
    <property type="protein sequence ID" value="CAA16713.1"/>
    <property type="status" value="ALT_SEQ"/>
    <property type="molecule type" value="Genomic_DNA"/>
</dbReference>
<dbReference type="EMBL" id="AL161550">
    <property type="protein sequence ID" value="CAB78925.1"/>
    <property type="status" value="ALT_SEQ"/>
    <property type="molecule type" value="Genomic_DNA"/>
</dbReference>
<dbReference type="EMBL" id="CP002687">
    <property type="protein sequence ID" value="AEE84162.1"/>
    <property type="molecule type" value="Genomic_DNA"/>
</dbReference>
<dbReference type="EMBL" id="AY050980">
    <property type="protein sequence ID" value="AAK93657.1"/>
    <property type="molecule type" value="mRNA"/>
</dbReference>
<dbReference type="EMBL" id="AY091446">
    <property type="protein sequence ID" value="AAM14385.1"/>
    <property type="molecule type" value="mRNA"/>
</dbReference>
<dbReference type="PIR" id="T04444">
    <property type="entry name" value="T04444"/>
</dbReference>
<dbReference type="RefSeq" id="NP_567581.1">
    <molecule id="Q949P1-1"/>
    <property type="nucleotide sequence ID" value="NM_118043.2"/>
</dbReference>
<dbReference type="SMR" id="Q949P1"/>
<dbReference type="BioGRID" id="12956">
    <property type="interactions" value="1"/>
</dbReference>
<dbReference type="FunCoup" id="Q949P1">
    <property type="interactions" value="224"/>
</dbReference>
<dbReference type="STRING" id="3702.Q949P1"/>
<dbReference type="PaxDb" id="3702-AT4G19230.2"/>
<dbReference type="EnsemblPlants" id="AT4G19230.1">
    <molecule id="Q949P1-1"/>
    <property type="protein sequence ID" value="AT4G19230.1"/>
    <property type="gene ID" value="AT4G19230"/>
</dbReference>
<dbReference type="GeneID" id="827663"/>
<dbReference type="Gramene" id="AT4G19230.1">
    <molecule id="Q949P1-1"/>
    <property type="protein sequence ID" value="AT4G19230.1"/>
    <property type="gene ID" value="AT4G19230"/>
</dbReference>
<dbReference type="KEGG" id="ath:AT4G19230"/>
<dbReference type="Araport" id="AT4G19230"/>
<dbReference type="TAIR" id="AT4G19230">
    <property type="gene designation" value="CYP707A1"/>
</dbReference>
<dbReference type="eggNOG" id="KOG0157">
    <property type="taxonomic scope" value="Eukaryota"/>
</dbReference>
<dbReference type="HOGENOM" id="CLU_001570_15_5_1"/>
<dbReference type="InParanoid" id="Q949P1"/>
<dbReference type="OMA" id="WDGQFVN"/>
<dbReference type="OrthoDB" id="1372046at2759"/>
<dbReference type="PhylomeDB" id="Q949P1"/>
<dbReference type="BioCyc" id="ARA:AT4G19230-MONOMER"/>
<dbReference type="BioCyc" id="MetaCyc:AT4G19230-MONOMER"/>
<dbReference type="BRENDA" id="1.14.14.137">
    <property type="organism ID" value="399"/>
</dbReference>
<dbReference type="UniPathway" id="UPA00093"/>
<dbReference type="PRO" id="PR:Q949P1"/>
<dbReference type="Proteomes" id="UP000006548">
    <property type="component" value="Chromosome 4"/>
</dbReference>
<dbReference type="ExpressionAtlas" id="Q949P1">
    <property type="expression patterns" value="baseline and differential"/>
</dbReference>
<dbReference type="GO" id="GO:0016020">
    <property type="term" value="C:membrane"/>
    <property type="evidence" value="ECO:0007669"/>
    <property type="project" value="UniProtKB-SubCell"/>
</dbReference>
<dbReference type="GO" id="GO:0010295">
    <property type="term" value="F:(+)-abscisic acid 8'-hydroxylase activity"/>
    <property type="evidence" value="ECO:0007669"/>
    <property type="project" value="UniProtKB-EC"/>
</dbReference>
<dbReference type="GO" id="GO:0020037">
    <property type="term" value="F:heme binding"/>
    <property type="evidence" value="ECO:0007669"/>
    <property type="project" value="InterPro"/>
</dbReference>
<dbReference type="GO" id="GO:0005506">
    <property type="term" value="F:iron ion binding"/>
    <property type="evidence" value="ECO:0007669"/>
    <property type="project" value="InterPro"/>
</dbReference>
<dbReference type="GO" id="GO:0046345">
    <property type="term" value="P:abscisic acid catabolic process"/>
    <property type="evidence" value="ECO:0007669"/>
    <property type="project" value="UniProtKB-UniPathway"/>
</dbReference>
<dbReference type="CDD" id="cd11043">
    <property type="entry name" value="CYP90-like"/>
    <property type="match status" value="1"/>
</dbReference>
<dbReference type="FunFam" id="1.10.630.10:FF:000014">
    <property type="entry name" value="Abscisic acid 8"/>
    <property type="match status" value="1"/>
</dbReference>
<dbReference type="Gene3D" id="1.10.630.10">
    <property type="entry name" value="Cytochrome P450"/>
    <property type="match status" value="1"/>
</dbReference>
<dbReference type="InterPro" id="IPR001128">
    <property type="entry name" value="Cyt_P450"/>
</dbReference>
<dbReference type="InterPro" id="IPR017972">
    <property type="entry name" value="Cyt_P450_CS"/>
</dbReference>
<dbReference type="InterPro" id="IPR002401">
    <property type="entry name" value="Cyt_P450_E_grp-I"/>
</dbReference>
<dbReference type="InterPro" id="IPR036396">
    <property type="entry name" value="Cyt_P450_sf"/>
</dbReference>
<dbReference type="PANTHER" id="PTHR24286:SF10">
    <property type="entry name" value="ABSCISIC ACID 8'-HYDROXYLASE 1"/>
    <property type="match status" value="1"/>
</dbReference>
<dbReference type="PANTHER" id="PTHR24286">
    <property type="entry name" value="CYTOCHROME P450 26"/>
    <property type="match status" value="1"/>
</dbReference>
<dbReference type="Pfam" id="PF00067">
    <property type="entry name" value="p450"/>
    <property type="match status" value="1"/>
</dbReference>
<dbReference type="PRINTS" id="PR00463">
    <property type="entry name" value="EP450I"/>
</dbReference>
<dbReference type="PRINTS" id="PR00385">
    <property type="entry name" value="P450"/>
</dbReference>
<dbReference type="SUPFAM" id="SSF48264">
    <property type="entry name" value="Cytochrome P450"/>
    <property type="match status" value="1"/>
</dbReference>
<dbReference type="PROSITE" id="PS00086">
    <property type="entry name" value="CYTOCHROME_P450"/>
    <property type="match status" value="1"/>
</dbReference>
<feature type="chain" id="PRO_0000288639" description="Abscisic acid 8'-hydroxylase 1">
    <location>
        <begin position="1"/>
        <end position="467"/>
    </location>
</feature>
<feature type="transmembrane region" description="Helical" evidence="2">
    <location>
        <begin position="5"/>
        <end position="24"/>
    </location>
</feature>
<feature type="binding site" description="axial binding residue" evidence="1">
    <location>
        <position position="411"/>
    </location>
    <ligand>
        <name>heme</name>
        <dbReference type="ChEBI" id="CHEBI:30413"/>
    </ligand>
    <ligandPart>
        <name>Fe</name>
        <dbReference type="ChEBI" id="CHEBI:18248"/>
    </ligandPart>
</feature>
<proteinExistence type="evidence at protein level"/>
<reference key="1">
    <citation type="journal article" date="2004" name="Plant Physiol.">
        <title>Arabidopsis CYP707As encode (+)-abscisic acid 8'-hydroxylase, a key enzyme in the oxidative catabolism of abscisic acid.</title>
        <authorList>
            <person name="Saito S."/>
            <person name="Hirai N."/>
            <person name="Matsumoto C."/>
            <person name="Ohigashi H."/>
            <person name="Ohta D."/>
            <person name="Sakata K."/>
            <person name="Mizutani M."/>
        </authorList>
    </citation>
    <scope>NUCLEOTIDE SEQUENCE [MRNA]</scope>
    <scope>FUNCTION</scope>
    <scope>CATALYTIC ACTIVITY</scope>
    <scope>TISSUE SPECIFICITY</scope>
    <scope>INDUCTION</scope>
</reference>
<reference key="2">
    <citation type="journal article" date="1999" name="Nature">
        <title>Sequence and analysis of chromosome 4 of the plant Arabidopsis thaliana.</title>
        <authorList>
            <person name="Mayer K.F.X."/>
            <person name="Schueller C."/>
            <person name="Wambutt R."/>
            <person name="Murphy G."/>
            <person name="Volckaert G."/>
            <person name="Pohl T."/>
            <person name="Duesterhoeft A."/>
            <person name="Stiekema W."/>
            <person name="Entian K.-D."/>
            <person name="Terryn N."/>
            <person name="Harris B."/>
            <person name="Ansorge W."/>
            <person name="Brandt P."/>
            <person name="Grivell L.A."/>
            <person name="Rieger M."/>
            <person name="Weichselgartner M."/>
            <person name="de Simone V."/>
            <person name="Obermaier B."/>
            <person name="Mache R."/>
            <person name="Mueller M."/>
            <person name="Kreis M."/>
            <person name="Delseny M."/>
            <person name="Puigdomenech P."/>
            <person name="Watson M."/>
            <person name="Schmidtheini T."/>
            <person name="Reichert B."/>
            <person name="Portetelle D."/>
            <person name="Perez-Alonso M."/>
            <person name="Boutry M."/>
            <person name="Bancroft I."/>
            <person name="Vos P."/>
            <person name="Hoheisel J."/>
            <person name="Zimmermann W."/>
            <person name="Wedler H."/>
            <person name="Ridley P."/>
            <person name="Langham S.-A."/>
            <person name="McCullagh B."/>
            <person name="Bilham L."/>
            <person name="Robben J."/>
            <person name="van der Schueren J."/>
            <person name="Grymonprez B."/>
            <person name="Chuang Y.-J."/>
            <person name="Vandenbussche F."/>
            <person name="Braeken M."/>
            <person name="Weltjens I."/>
            <person name="Voet M."/>
            <person name="Bastiaens I."/>
            <person name="Aert R."/>
            <person name="Defoor E."/>
            <person name="Weitzenegger T."/>
            <person name="Bothe G."/>
            <person name="Ramsperger U."/>
            <person name="Hilbert H."/>
            <person name="Braun M."/>
            <person name="Holzer E."/>
            <person name="Brandt A."/>
            <person name="Peters S."/>
            <person name="van Staveren M."/>
            <person name="Dirkse W."/>
            <person name="Mooijman P."/>
            <person name="Klein Lankhorst R."/>
            <person name="Rose M."/>
            <person name="Hauf J."/>
            <person name="Koetter P."/>
            <person name="Berneiser S."/>
            <person name="Hempel S."/>
            <person name="Feldpausch M."/>
            <person name="Lamberth S."/>
            <person name="Van den Daele H."/>
            <person name="De Keyser A."/>
            <person name="Buysshaert C."/>
            <person name="Gielen J."/>
            <person name="Villarroel R."/>
            <person name="De Clercq R."/>
            <person name="van Montagu M."/>
            <person name="Rogers J."/>
            <person name="Cronin A."/>
            <person name="Quail M.A."/>
            <person name="Bray-Allen S."/>
            <person name="Clark L."/>
            <person name="Doggett J."/>
            <person name="Hall S."/>
            <person name="Kay M."/>
            <person name="Lennard N."/>
            <person name="McLay K."/>
            <person name="Mayes R."/>
            <person name="Pettett A."/>
            <person name="Rajandream M.A."/>
            <person name="Lyne M."/>
            <person name="Benes V."/>
            <person name="Rechmann S."/>
            <person name="Borkova D."/>
            <person name="Bloecker H."/>
            <person name="Scharfe M."/>
            <person name="Grimm M."/>
            <person name="Loehnert T.-H."/>
            <person name="Dose S."/>
            <person name="de Haan M."/>
            <person name="Maarse A.C."/>
            <person name="Schaefer M."/>
            <person name="Mueller-Auer S."/>
            <person name="Gabel C."/>
            <person name="Fuchs M."/>
            <person name="Fartmann B."/>
            <person name="Granderath K."/>
            <person name="Dauner D."/>
            <person name="Herzl A."/>
            <person name="Neumann S."/>
            <person name="Argiriou A."/>
            <person name="Vitale D."/>
            <person name="Liguori R."/>
            <person name="Piravandi E."/>
            <person name="Massenet O."/>
            <person name="Quigley F."/>
            <person name="Clabauld G."/>
            <person name="Muendlein A."/>
            <person name="Felber R."/>
            <person name="Schnabl S."/>
            <person name="Hiller R."/>
            <person name="Schmidt W."/>
            <person name="Lecharny A."/>
            <person name="Aubourg S."/>
            <person name="Chefdor F."/>
            <person name="Cooke R."/>
            <person name="Berger C."/>
            <person name="Monfort A."/>
            <person name="Casacuberta E."/>
            <person name="Gibbons T."/>
            <person name="Weber N."/>
            <person name="Vandenbol M."/>
            <person name="Bargues M."/>
            <person name="Terol J."/>
            <person name="Torres A."/>
            <person name="Perez-Perez A."/>
            <person name="Purnelle B."/>
            <person name="Bent E."/>
            <person name="Johnson S."/>
            <person name="Tacon D."/>
            <person name="Jesse T."/>
            <person name="Heijnen L."/>
            <person name="Schwarz S."/>
            <person name="Scholler P."/>
            <person name="Heber S."/>
            <person name="Francs P."/>
            <person name="Bielke C."/>
            <person name="Frishman D."/>
            <person name="Haase D."/>
            <person name="Lemcke K."/>
            <person name="Mewes H.-W."/>
            <person name="Stocker S."/>
            <person name="Zaccaria P."/>
            <person name="Bevan M."/>
            <person name="Wilson R.K."/>
            <person name="de la Bastide M."/>
            <person name="Habermann K."/>
            <person name="Parnell L."/>
            <person name="Dedhia N."/>
            <person name="Gnoj L."/>
            <person name="Schutz K."/>
            <person name="Huang E."/>
            <person name="Spiegel L."/>
            <person name="Sekhon M."/>
            <person name="Murray J."/>
            <person name="Sheet P."/>
            <person name="Cordes M."/>
            <person name="Abu-Threideh J."/>
            <person name="Stoneking T."/>
            <person name="Kalicki J."/>
            <person name="Graves T."/>
            <person name="Harmon G."/>
            <person name="Edwards J."/>
            <person name="Latreille P."/>
            <person name="Courtney L."/>
            <person name="Cloud J."/>
            <person name="Abbott A."/>
            <person name="Scott K."/>
            <person name="Johnson D."/>
            <person name="Minx P."/>
            <person name="Bentley D."/>
            <person name="Fulton B."/>
            <person name="Miller N."/>
            <person name="Greco T."/>
            <person name="Kemp K."/>
            <person name="Kramer J."/>
            <person name="Fulton L."/>
            <person name="Mardis E."/>
            <person name="Dante M."/>
            <person name="Pepin K."/>
            <person name="Hillier L.W."/>
            <person name="Nelson J."/>
            <person name="Spieth J."/>
            <person name="Ryan E."/>
            <person name="Andrews S."/>
            <person name="Geisel C."/>
            <person name="Layman D."/>
            <person name="Du H."/>
            <person name="Ali J."/>
            <person name="Berghoff A."/>
            <person name="Jones K."/>
            <person name="Drone K."/>
            <person name="Cotton M."/>
            <person name="Joshu C."/>
            <person name="Antonoiu B."/>
            <person name="Zidanic M."/>
            <person name="Strong C."/>
            <person name="Sun H."/>
            <person name="Lamar B."/>
            <person name="Yordan C."/>
            <person name="Ma P."/>
            <person name="Zhong J."/>
            <person name="Preston R."/>
            <person name="Vil D."/>
            <person name="Shekher M."/>
            <person name="Matero A."/>
            <person name="Shah R."/>
            <person name="Swaby I.K."/>
            <person name="O'Shaughnessy A."/>
            <person name="Rodriguez M."/>
            <person name="Hoffman J."/>
            <person name="Till S."/>
            <person name="Granat S."/>
            <person name="Shohdy N."/>
            <person name="Hasegawa A."/>
            <person name="Hameed A."/>
            <person name="Lodhi M."/>
            <person name="Johnson A."/>
            <person name="Chen E."/>
            <person name="Marra M.A."/>
            <person name="Martienssen R."/>
            <person name="McCombie W.R."/>
        </authorList>
    </citation>
    <scope>NUCLEOTIDE SEQUENCE [LARGE SCALE GENOMIC DNA]</scope>
    <source>
        <strain>cv. Columbia</strain>
    </source>
</reference>
<reference key="3">
    <citation type="journal article" date="2017" name="Plant J.">
        <title>Araport11: a complete reannotation of the Arabidopsis thaliana reference genome.</title>
        <authorList>
            <person name="Cheng C.Y."/>
            <person name="Krishnakumar V."/>
            <person name="Chan A.P."/>
            <person name="Thibaud-Nissen F."/>
            <person name="Schobel S."/>
            <person name="Town C.D."/>
        </authorList>
    </citation>
    <scope>GENOME REANNOTATION</scope>
    <source>
        <strain>cv. Columbia</strain>
    </source>
</reference>
<reference key="4">
    <citation type="journal article" date="2003" name="Science">
        <title>Empirical analysis of transcriptional activity in the Arabidopsis genome.</title>
        <authorList>
            <person name="Yamada K."/>
            <person name="Lim J."/>
            <person name="Dale J.M."/>
            <person name="Chen H."/>
            <person name="Shinn P."/>
            <person name="Palm C.J."/>
            <person name="Southwick A.M."/>
            <person name="Wu H.C."/>
            <person name="Kim C.J."/>
            <person name="Nguyen M."/>
            <person name="Pham P.K."/>
            <person name="Cheuk R.F."/>
            <person name="Karlin-Newmann G."/>
            <person name="Liu S.X."/>
            <person name="Lam B."/>
            <person name="Sakano H."/>
            <person name="Wu T."/>
            <person name="Yu G."/>
            <person name="Miranda M."/>
            <person name="Quach H.L."/>
            <person name="Tripp M."/>
            <person name="Chang C.H."/>
            <person name="Lee J.M."/>
            <person name="Toriumi M.J."/>
            <person name="Chan M.M."/>
            <person name="Tang C.C."/>
            <person name="Onodera C.S."/>
            <person name="Deng J.M."/>
            <person name="Akiyama K."/>
            <person name="Ansari Y."/>
            <person name="Arakawa T."/>
            <person name="Banh J."/>
            <person name="Banno F."/>
            <person name="Bowser L."/>
            <person name="Brooks S.Y."/>
            <person name="Carninci P."/>
            <person name="Chao Q."/>
            <person name="Choy N."/>
            <person name="Enju A."/>
            <person name="Goldsmith A.D."/>
            <person name="Gurjal M."/>
            <person name="Hansen N.F."/>
            <person name="Hayashizaki Y."/>
            <person name="Johnson-Hopson C."/>
            <person name="Hsuan V.W."/>
            <person name="Iida K."/>
            <person name="Karnes M."/>
            <person name="Khan S."/>
            <person name="Koesema E."/>
            <person name="Ishida J."/>
            <person name="Jiang P.X."/>
            <person name="Jones T."/>
            <person name="Kawai J."/>
            <person name="Kamiya A."/>
            <person name="Meyers C."/>
            <person name="Nakajima M."/>
            <person name="Narusaka M."/>
            <person name="Seki M."/>
            <person name="Sakurai T."/>
            <person name="Satou M."/>
            <person name="Tamse R."/>
            <person name="Vaysberg M."/>
            <person name="Wallender E.K."/>
            <person name="Wong C."/>
            <person name="Yamamura Y."/>
            <person name="Yuan S."/>
            <person name="Shinozaki K."/>
            <person name="Davis R.W."/>
            <person name="Theologis A."/>
            <person name="Ecker J.R."/>
        </authorList>
    </citation>
    <scope>NUCLEOTIDE SEQUENCE [LARGE SCALE MRNA]</scope>
    <source>
        <strain>cv. Columbia</strain>
    </source>
</reference>
<reference key="5">
    <citation type="journal article" date="2004" name="EMBO J.">
        <title>The Arabidopsis cytochrome P450 CYP707A encodes ABA 8'-hydroxylases: key enzymes in ABA catabolism.</title>
        <authorList>
            <person name="Kushiro T."/>
            <person name="Okamoto M."/>
            <person name="Nakabayashi K."/>
            <person name="Yamagishi K."/>
            <person name="Kitamura S."/>
            <person name="Asami T."/>
            <person name="Hirai N."/>
            <person name="Koshiba T."/>
            <person name="Kamiya Y."/>
            <person name="Nambara E."/>
        </authorList>
    </citation>
    <scope>IDENTIFICATION</scope>
    <scope>FUNCTION</scope>
    <scope>TISSUE SPECIFICITY</scope>
    <scope>DEVELOPMENTAL STAGE</scope>
    <scope>INDUCTION</scope>
</reference>
<reference key="6">
    <citation type="journal article" date="2006" name="Plant Physiol.">
        <title>CYP707A1 and CYP707A2, which encode abscisic acid 8'-hydroxylases, are indispensable for proper control of seed dormancy and germination in Arabidopsis.</title>
        <authorList>
            <person name="Okamoto M."/>
            <person name="Kuwahara A."/>
            <person name="Seo M."/>
            <person name="Kushiro T."/>
            <person name="Asami T."/>
            <person name="Hirai N."/>
            <person name="Kamiya Y."/>
            <person name="Koshiba T."/>
            <person name="Nambara E."/>
        </authorList>
    </citation>
    <scope>FUNCTION</scope>
    <scope>DEVELOPMENTAL STAGE</scope>
    <scope>TISSUE SPECIFICITY</scope>
    <scope>DISRUPTION PHENOTYPE</scope>
</reference>
<reference key="7">
    <citation type="journal article" date="2006" name="Plant J.">
        <title>Regulation of hormone metabolism in Arabidopsis seeds: phytochrome regulation of abscisic acid metabolism and abscisic acid regulation of gibberellin metabolism.</title>
        <authorList>
            <person name="Seo M."/>
            <person name="Hanada A."/>
            <person name="Kuwahara A."/>
            <person name="Endo A."/>
            <person name="Okamoto M."/>
            <person name="Yamauchi Y."/>
            <person name="North H."/>
            <person name="Marion-Poll A."/>
            <person name="Sun T.P."/>
            <person name="Koshiba T."/>
            <person name="Kamiya Y."/>
            <person name="Yamaguchi S."/>
            <person name="Nambara E."/>
        </authorList>
    </citation>
    <scope>INDUCTION BY PHYTOCHROME B</scope>
</reference>
<gene>
    <name type="primary">CYP707A1</name>
    <name type="ordered locus">At4g19230</name>
    <name type="ORF">T18B16.200</name>
</gene>
<accession>Q949P1</accession>
<accession>O65624</accession>